<reference key="1">
    <citation type="journal article" date="1998" name="Biochim. Biophys. Acta">
        <title>Sequences and expression of six new members of the tetraspanin/TM4SF family.</title>
        <authorList>
            <person name="Todd S.C."/>
            <person name="Doctor V.S."/>
            <person name="Levy S."/>
        </authorList>
    </citation>
    <scope>NUCLEOTIDE SEQUENCE [MRNA]</scope>
</reference>
<reference key="2">
    <citation type="journal article" date="2009" name="Nat. Biotechnol.">
        <title>Mass-spectrometric identification and relative quantification of N-linked cell surface glycoproteins.</title>
        <authorList>
            <person name="Wollscheid B."/>
            <person name="Bausch-Fluck D."/>
            <person name="Henderson C."/>
            <person name="O'Brien R."/>
            <person name="Bibel M."/>
            <person name="Schiess R."/>
            <person name="Aebersold R."/>
            <person name="Watts J.D."/>
        </authorList>
    </citation>
    <scope>GLYCOSYLATION [LARGE SCALE ANALYSIS] AT ASN-134</scope>
</reference>
<reference key="3">
    <citation type="journal article" date="2010" name="Cell">
        <title>A tissue-specific atlas of mouse protein phosphorylation and expression.</title>
        <authorList>
            <person name="Huttlin E.L."/>
            <person name="Jedrychowski M.P."/>
            <person name="Elias J.E."/>
            <person name="Goswami T."/>
            <person name="Rad R."/>
            <person name="Beausoleil S.A."/>
            <person name="Villen J."/>
            <person name="Haas W."/>
            <person name="Sowa M.E."/>
            <person name="Gygi S.P."/>
        </authorList>
    </citation>
    <scope>IDENTIFICATION BY MASS SPECTROMETRY [LARGE SCALE ANALYSIS]</scope>
    <source>
        <tissue>Brain</tissue>
    </source>
</reference>
<keyword id="KW-0325">Glycoprotein</keyword>
<keyword id="KW-0472">Membrane</keyword>
<keyword id="KW-1185">Reference proteome</keyword>
<keyword id="KW-0812">Transmembrane</keyword>
<keyword id="KW-1133">Transmembrane helix</keyword>
<name>TSN6_MOUSE</name>
<sequence length="245" mass="27333">MASPSRRLQTKPVITCLKSVLLIYTFIFWITGVILLAVGIWGKVSLENYFSLLNEKATNVPFVLIGTGTVIILLGTFGCFATCRTSAWMLKLYAMFLTLIFLVELVAAIVGFVFRHEIKNSFKSNYENALKEYNSTGDYRSEAVDKIQSTLHCCGVTNYGDWKGTNYYSETGFPKSCCKLEGCYPQRDADKVNEEGCFIKVMTTIESEMGVVAGISFGVACFQLIGIFLAYCLSRAITNNQYEIV</sequence>
<organism>
    <name type="scientific">Mus musculus</name>
    <name type="common">Mouse</name>
    <dbReference type="NCBI Taxonomy" id="10090"/>
    <lineage>
        <taxon>Eukaryota</taxon>
        <taxon>Metazoa</taxon>
        <taxon>Chordata</taxon>
        <taxon>Craniata</taxon>
        <taxon>Vertebrata</taxon>
        <taxon>Euteleostomi</taxon>
        <taxon>Mammalia</taxon>
        <taxon>Eutheria</taxon>
        <taxon>Euarchontoglires</taxon>
        <taxon>Glires</taxon>
        <taxon>Rodentia</taxon>
        <taxon>Myomorpha</taxon>
        <taxon>Muroidea</taxon>
        <taxon>Muridae</taxon>
        <taxon>Murinae</taxon>
        <taxon>Mus</taxon>
        <taxon>Mus</taxon>
    </lineage>
</organism>
<comment type="subcellular location">
    <subcellularLocation>
        <location>Membrane</location>
        <topology>Multi-pass membrane protein</topology>
    </subcellularLocation>
</comment>
<comment type="similarity">
    <text evidence="3">Belongs to the tetraspanin (TM4SF) family.</text>
</comment>
<gene>
    <name type="primary">Tspan6</name>
    <name type="synonym">Tm4sf6</name>
</gene>
<accession>O70401</accession>
<evidence type="ECO:0000255" key="1"/>
<evidence type="ECO:0000269" key="2">
    <source>
    </source>
</evidence>
<evidence type="ECO:0000305" key="3"/>
<feature type="chain" id="PRO_0000219247" description="Tetraspanin-6">
    <location>
        <begin position="1"/>
        <end position="245"/>
    </location>
</feature>
<feature type="topological domain" description="Cytoplasmic" evidence="1">
    <location>
        <begin position="1"/>
        <end position="19"/>
    </location>
</feature>
<feature type="transmembrane region" description="Helical" evidence="1">
    <location>
        <begin position="20"/>
        <end position="40"/>
    </location>
</feature>
<feature type="topological domain" description="Extracellular" evidence="1">
    <location>
        <begin position="41"/>
        <end position="59"/>
    </location>
</feature>
<feature type="transmembrane region" description="Helical" evidence="1">
    <location>
        <begin position="60"/>
        <end position="80"/>
    </location>
</feature>
<feature type="topological domain" description="Cytoplasmic" evidence="1">
    <location>
        <begin position="81"/>
        <end position="93"/>
    </location>
</feature>
<feature type="transmembrane region" description="Helical" evidence="1">
    <location>
        <begin position="94"/>
        <end position="114"/>
    </location>
</feature>
<feature type="topological domain" description="Extracellular" evidence="1">
    <location>
        <begin position="115"/>
        <end position="208"/>
    </location>
</feature>
<feature type="transmembrane region" description="Helical" evidence="1">
    <location>
        <begin position="209"/>
        <end position="229"/>
    </location>
</feature>
<feature type="topological domain" description="Cytoplasmic" evidence="1">
    <location>
        <begin position="230"/>
        <end position="245"/>
    </location>
</feature>
<feature type="glycosylation site" description="N-linked (GlcNAc...) asparagine" evidence="2">
    <location>
        <position position="134"/>
    </location>
</feature>
<dbReference type="EMBL" id="AF053454">
    <property type="protein sequence ID" value="AAC69711.1"/>
    <property type="molecule type" value="mRNA"/>
</dbReference>
<dbReference type="CCDS" id="CCDS30387.1"/>
<dbReference type="PIR" id="A59260">
    <property type="entry name" value="A59260"/>
</dbReference>
<dbReference type="SMR" id="O70401"/>
<dbReference type="FunCoup" id="O70401">
    <property type="interactions" value="7"/>
</dbReference>
<dbReference type="STRING" id="10090.ENSMUSP00000084838"/>
<dbReference type="GlyCosmos" id="O70401">
    <property type="glycosylation" value="1 site, No reported glycans"/>
</dbReference>
<dbReference type="GlyGen" id="O70401">
    <property type="glycosylation" value="1 site, 1 N-linked glycan (1 site)"/>
</dbReference>
<dbReference type="iPTMnet" id="O70401"/>
<dbReference type="PhosphoSitePlus" id="O70401"/>
<dbReference type="SwissPalm" id="O70401"/>
<dbReference type="PaxDb" id="10090-ENSMUSP00000084838"/>
<dbReference type="PeptideAtlas" id="O70401"/>
<dbReference type="ProteomicsDB" id="297725"/>
<dbReference type="Pumba" id="O70401"/>
<dbReference type="AGR" id="MGI:1926264"/>
<dbReference type="MGI" id="MGI:1926264">
    <property type="gene designation" value="Tspan6"/>
</dbReference>
<dbReference type="eggNOG" id="KOG3882">
    <property type="taxonomic scope" value="Eukaryota"/>
</dbReference>
<dbReference type="InParanoid" id="O70401"/>
<dbReference type="OrthoDB" id="6505042at2759"/>
<dbReference type="ChiTaRS" id="Tspan6">
    <property type="organism name" value="mouse"/>
</dbReference>
<dbReference type="PRO" id="PR:O70401"/>
<dbReference type="Proteomes" id="UP000000589">
    <property type="component" value="Unplaced"/>
</dbReference>
<dbReference type="RNAct" id="O70401">
    <property type="molecule type" value="protein"/>
</dbReference>
<dbReference type="GO" id="GO:0016020">
    <property type="term" value="C:membrane"/>
    <property type="evidence" value="ECO:0007669"/>
    <property type="project" value="UniProtKB-SubCell"/>
</dbReference>
<dbReference type="CDD" id="cd03161">
    <property type="entry name" value="TM4SF2_6_like_LEL"/>
    <property type="match status" value="1"/>
</dbReference>
<dbReference type="FunFam" id="1.10.1450.10:FF:000013">
    <property type="entry name" value="Tetraspanin"/>
    <property type="match status" value="1"/>
</dbReference>
<dbReference type="Gene3D" id="1.10.1450.10">
    <property type="entry name" value="Tetraspanin"/>
    <property type="match status" value="1"/>
</dbReference>
<dbReference type="InterPro" id="IPR018499">
    <property type="entry name" value="Tetraspanin/Peripherin"/>
</dbReference>
<dbReference type="InterPro" id="IPR000301">
    <property type="entry name" value="Tetraspanin_animals"/>
</dbReference>
<dbReference type="InterPro" id="IPR008952">
    <property type="entry name" value="Tetraspanin_EC2_sf"/>
</dbReference>
<dbReference type="InterPro" id="IPR048232">
    <property type="entry name" value="TSN6/7_LEL"/>
</dbReference>
<dbReference type="PANTHER" id="PTHR19282">
    <property type="entry name" value="TETRASPANIN"/>
    <property type="match status" value="1"/>
</dbReference>
<dbReference type="PANTHER" id="PTHR19282:SF169">
    <property type="entry name" value="TETRASPANIN-6"/>
    <property type="match status" value="1"/>
</dbReference>
<dbReference type="Pfam" id="PF00335">
    <property type="entry name" value="Tetraspanin"/>
    <property type="match status" value="1"/>
</dbReference>
<dbReference type="PIRSF" id="PIRSF002419">
    <property type="entry name" value="Tetraspanin"/>
    <property type="match status" value="1"/>
</dbReference>
<dbReference type="PRINTS" id="PR00259">
    <property type="entry name" value="TMFOUR"/>
</dbReference>
<dbReference type="SUPFAM" id="SSF48652">
    <property type="entry name" value="Tetraspanin"/>
    <property type="match status" value="1"/>
</dbReference>
<protein>
    <recommendedName>
        <fullName>Tetraspanin-6</fullName>
        <shortName>Tspan-6</shortName>
    </recommendedName>
    <alternativeName>
        <fullName>Transmembrane 4 superfamily member 6</fullName>
    </alternativeName>
</protein>
<proteinExistence type="evidence at protein level"/>